<protein>
    <recommendedName>
        <fullName evidence="1">NAD(P)H-quinone oxidoreductase subunit I, chloroplastic</fullName>
        <ecNumber evidence="1">7.1.1.-</ecNumber>
    </recommendedName>
    <alternativeName>
        <fullName evidence="1">NAD(P)H dehydrogenase subunit I</fullName>
        <shortName evidence="1">NDH subunit I</shortName>
    </alternativeName>
    <alternativeName>
        <fullName evidence="1">NADH-plastoquinone oxidoreductase subunit I</fullName>
    </alternativeName>
</protein>
<accession>Q8HVV8</accession>
<gene>
    <name evidence="1" type="primary">ndhI</name>
</gene>
<comment type="function">
    <text evidence="1">NDH shuttles electrons from NAD(P)H:plastoquinone, via FMN and iron-sulfur (Fe-S) centers, to quinones in the photosynthetic chain and possibly in a chloroplast respiratory chain. The immediate electron acceptor for the enzyme in this species is believed to be plastoquinone. Couples the redox reaction to proton translocation, and thus conserves the redox energy in a proton gradient.</text>
</comment>
<comment type="catalytic activity">
    <reaction evidence="1">
        <text>a plastoquinone + NADH + (n+1) H(+)(in) = a plastoquinol + NAD(+) + n H(+)(out)</text>
        <dbReference type="Rhea" id="RHEA:42608"/>
        <dbReference type="Rhea" id="RHEA-COMP:9561"/>
        <dbReference type="Rhea" id="RHEA-COMP:9562"/>
        <dbReference type="ChEBI" id="CHEBI:15378"/>
        <dbReference type="ChEBI" id="CHEBI:17757"/>
        <dbReference type="ChEBI" id="CHEBI:57540"/>
        <dbReference type="ChEBI" id="CHEBI:57945"/>
        <dbReference type="ChEBI" id="CHEBI:62192"/>
    </reaction>
</comment>
<comment type="catalytic activity">
    <reaction evidence="1">
        <text>a plastoquinone + NADPH + (n+1) H(+)(in) = a plastoquinol + NADP(+) + n H(+)(out)</text>
        <dbReference type="Rhea" id="RHEA:42612"/>
        <dbReference type="Rhea" id="RHEA-COMP:9561"/>
        <dbReference type="Rhea" id="RHEA-COMP:9562"/>
        <dbReference type="ChEBI" id="CHEBI:15378"/>
        <dbReference type="ChEBI" id="CHEBI:17757"/>
        <dbReference type="ChEBI" id="CHEBI:57783"/>
        <dbReference type="ChEBI" id="CHEBI:58349"/>
        <dbReference type="ChEBI" id="CHEBI:62192"/>
    </reaction>
</comment>
<comment type="cofactor">
    <cofactor evidence="1">
        <name>[4Fe-4S] cluster</name>
        <dbReference type="ChEBI" id="CHEBI:49883"/>
    </cofactor>
    <text evidence="1">Binds 2 [4Fe-4S] clusters per subunit.</text>
</comment>
<comment type="subunit">
    <text evidence="1">NDH is composed of at least 16 different subunits, 5 of which are encoded in the nucleus.</text>
</comment>
<comment type="subcellular location">
    <subcellularLocation>
        <location evidence="1">Plastid</location>
        <location evidence="1">Chloroplast thylakoid membrane</location>
        <topology evidence="1">Peripheral membrane protein</topology>
    </subcellularLocation>
</comment>
<comment type="similarity">
    <text evidence="1">Belongs to the complex I 23 kDa subunit family.</text>
</comment>
<keyword id="KW-0004">4Fe-4S</keyword>
<keyword id="KW-0150">Chloroplast</keyword>
<keyword id="KW-0408">Iron</keyword>
<keyword id="KW-0411">Iron-sulfur</keyword>
<keyword id="KW-0472">Membrane</keyword>
<keyword id="KW-0479">Metal-binding</keyword>
<keyword id="KW-0520">NAD</keyword>
<keyword id="KW-0521">NADP</keyword>
<keyword id="KW-0934">Plastid</keyword>
<keyword id="KW-0618">Plastoquinone</keyword>
<keyword id="KW-0874">Quinone</keyword>
<keyword id="KW-0677">Repeat</keyword>
<keyword id="KW-0793">Thylakoid</keyword>
<keyword id="KW-1278">Translocase</keyword>
<feature type="chain" id="PRO_0000245651" description="NAD(P)H-quinone oxidoreductase subunit I, chloroplastic">
    <location>
        <begin position="1"/>
        <end position="166"/>
    </location>
</feature>
<feature type="domain" description="4Fe-4S ferredoxin-type 1" evidence="1">
    <location>
        <begin position="55"/>
        <end position="84"/>
    </location>
</feature>
<feature type="domain" description="4Fe-4S ferredoxin-type 2" evidence="1">
    <location>
        <begin position="95"/>
        <end position="124"/>
    </location>
</feature>
<feature type="binding site" evidence="1">
    <location>
        <position position="64"/>
    </location>
    <ligand>
        <name>[4Fe-4S] cluster</name>
        <dbReference type="ChEBI" id="CHEBI:49883"/>
        <label>1</label>
    </ligand>
</feature>
<feature type="binding site" evidence="1">
    <location>
        <position position="67"/>
    </location>
    <ligand>
        <name>[4Fe-4S] cluster</name>
        <dbReference type="ChEBI" id="CHEBI:49883"/>
        <label>1</label>
    </ligand>
</feature>
<feature type="binding site" evidence="1">
    <location>
        <position position="70"/>
    </location>
    <ligand>
        <name>[4Fe-4S] cluster</name>
        <dbReference type="ChEBI" id="CHEBI:49883"/>
        <label>1</label>
    </ligand>
</feature>
<feature type="binding site" evidence="1">
    <location>
        <position position="74"/>
    </location>
    <ligand>
        <name>[4Fe-4S] cluster</name>
        <dbReference type="ChEBI" id="CHEBI:49883"/>
        <label>2</label>
    </ligand>
</feature>
<feature type="binding site" evidence="1">
    <location>
        <position position="104"/>
    </location>
    <ligand>
        <name>[4Fe-4S] cluster</name>
        <dbReference type="ChEBI" id="CHEBI:49883"/>
        <label>2</label>
    </ligand>
</feature>
<feature type="binding site" evidence="1">
    <location>
        <position position="107"/>
    </location>
    <ligand>
        <name>[4Fe-4S] cluster</name>
        <dbReference type="ChEBI" id="CHEBI:49883"/>
        <label>2</label>
    </ligand>
</feature>
<feature type="binding site" evidence="1">
    <location>
        <position position="110"/>
    </location>
    <ligand>
        <name>[4Fe-4S] cluster</name>
        <dbReference type="ChEBI" id="CHEBI:49883"/>
        <label>2</label>
    </ligand>
</feature>
<feature type="binding site" evidence="1">
    <location>
        <position position="114"/>
    </location>
    <ligand>
        <name>[4Fe-4S] cluster</name>
        <dbReference type="ChEBI" id="CHEBI:49883"/>
        <label>1</label>
    </ligand>
</feature>
<name>NDHI_AMBTR</name>
<proteinExistence type="inferred from homology"/>
<evidence type="ECO:0000255" key="1">
    <source>
        <dbReference type="HAMAP-Rule" id="MF_01351"/>
    </source>
</evidence>
<organism>
    <name type="scientific">Ambrosia trifida</name>
    <name type="common">Giant ragweed</name>
    <dbReference type="NCBI Taxonomy" id="4214"/>
    <lineage>
        <taxon>Eukaryota</taxon>
        <taxon>Viridiplantae</taxon>
        <taxon>Streptophyta</taxon>
        <taxon>Embryophyta</taxon>
        <taxon>Tracheophyta</taxon>
        <taxon>Spermatophyta</taxon>
        <taxon>Magnoliopsida</taxon>
        <taxon>eudicotyledons</taxon>
        <taxon>Gunneridae</taxon>
        <taxon>Pentapetalae</taxon>
        <taxon>asterids</taxon>
        <taxon>campanulids</taxon>
        <taxon>Asterales</taxon>
        <taxon>Asteraceae</taxon>
        <taxon>Asteroideae</taxon>
        <taxon>Heliantheae alliance</taxon>
        <taxon>Heliantheae</taxon>
        <taxon>Ambrosia</taxon>
    </lineage>
</organism>
<dbReference type="EC" id="7.1.1.-" evidence="1"/>
<dbReference type="EMBL" id="AF383754">
    <property type="protein sequence ID" value="AAN61696.1"/>
    <property type="molecule type" value="Genomic_DNA"/>
</dbReference>
<dbReference type="RefSeq" id="YP_009456360.1">
    <property type="nucleotide sequence ID" value="NC_036810.2"/>
</dbReference>
<dbReference type="SMR" id="Q8HVV8"/>
<dbReference type="GeneID" id="35656666"/>
<dbReference type="GO" id="GO:0009535">
    <property type="term" value="C:chloroplast thylakoid membrane"/>
    <property type="evidence" value="ECO:0007669"/>
    <property type="project" value="UniProtKB-SubCell"/>
</dbReference>
<dbReference type="GO" id="GO:0051539">
    <property type="term" value="F:4 iron, 4 sulfur cluster binding"/>
    <property type="evidence" value="ECO:0007669"/>
    <property type="project" value="UniProtKB-KW"/>
</dbReference>
<dbReference type="GO" id="GO:0005506">
    <property type="term" value="F:iron ion binding"/>
    <property type="evidence" value="ECO:0007669"/>
    <property type="project" value="UniProtKB-UniRule"/>
</dbReference>
<dbReference type="GO" id="GO:0008137">
    <property type="term" value="F:NADH dehydrogenase (ubiquinone) activity"/>
    <property type="evidence" value="ECO:0007669"/>
    <property type="project" value="InterPro"/>
</dbReference>
<dbReference type="GO" id="GO:0048038">
    <property type="term" value="F:quinone binding"/>
    <property type="evidence" value="ECO:0007669"/>
    <property type="project" value="UniProtKB-KW"/>
</dbReference>
<dbReference type="GO" id="GO:0019684">
    <property type="term" value="P:photosynthesis, light reaction"/>
    <property type="evidence" value="ECO:0007669"/>
    <property type="project" value="UniProtKB-UniRule"/>
</dbReference>
<dbReference type="FunFam" id="3.30.70.3270:FF:000006">
    <property type="entry name" value="NAD(P)H-quinone oxidoreductase subunit I, chloroplastic"/>
    <property type="match status" value="1"/>
</dbReference>
<dbReference type="Gene3D" id="3.30.70.3270">
    <property type="match status" value="1"/>
</dbReference>
<dbReference type="HAMAP" id="MF_01351">
    <property type="entry name" value="NDH1_NuoI"/>
    <property type="match status" value="1"/>
</dbReference>
<dbReference type="InterPro" id="IPR017896">
    <property type="entry name" value="4Fe4S_Fe-S-bd"/>
</dbReference>
<dbReference type="InterPro" id="IPR017900">
    <property type="entry name" value="4Fe4S_Fe_S_CS"/>
</dbReference>
<dbReference type="InterPro" id="IPR010226">
    <property type="entry name" value="NADH_quinone_OxRdtase_chainI"/>
</dbReference>
<dbReference type="InterPro" id="IPR004497">
    <property type="entry name" value="NDHI"/>
</dbReference>
<dbReference type="NCBIfam" id="TIGR00403">
    <property type="entry name" value="ndhI"/>
    <property type="match status" value="1"/>
</dbReference>
<dbReference type="NCBIfam" id="TIGR01971">
    <property type="entry name" value="NuoI"/>
    <property type="match status" value="1"/>
</dbReference>
<dbReference type="NCBIfam" id="NF004537">
    <property type="entry name" value="PRK05888.1-3"/>
    <property type="match status" value="1"/>
</dbReference>
<dbReference type="PANTHER" id="PTHR47275">
    <property type="entry name" value="NAD(P)H-QUINONE OXIDOREDUCTASE SUBUNIT I, CHLOROPLASTIC"/>
    <property type="match status" value="1"/>
</dbReference>
<dbReference type="PANTHER" id="PTHR47275:SF1">
    <property type="entry name" value="NAD(P)H-QUINONE OXIDOREDUCTASE SUBUNIT I, CHLOROPLASTIC"/>
    <property type="match status" value="1"/>
</dbReference>
<dbReference type="Pfam" id="PF00037">
    <property type="entry name" value="Fer4"/>
    <property type="match status" value="2"/>
</dbReference>
<dbReference type="SUPFAM" id="SSF54862">
    <property type="entry name" value="4Fe-4S ferredoxins"/>
    <property type="match status" value="1"/>
</dbReference>
<dbReference type="PROSITE" id="PS00198">
    <property type="entry name" value="4FE4S_FER_1"/>
    <property type="match status" value="2"/>
</dbReference>
<dbReference type="PROSITE" id="PS51379">
    <property type="entry name" value="4FE4S_FER_2"/>
    <property type="match status" value="2"/>
</dbReference>
<reference key="1">
    <citation type="submission" date="2003-01" db="EMBL/GenBank/DDBJ databases">
        <title>Chloroplast DNA phylogeny of tribe Heliantheae (Asteraceae).</title>
        <authorList>
            <person name="Panero J.L."/>
            <person name="Baldwin B.G."/>
            <person name="Schilling E.E."/>
            <person name="Clevinger J.A."/>
        </authorList>
    </citation>
    <scope>NUCLEOTIDE SEQUENCE [LARGE SCALE GENOMIC DNA]</scope>
</reference>
<geneLocation type="chloroplast"/>
<sequence>MFPMVTEFMNYGQQTVRAARYIGQGFMITLSHANRLPVTIQYPYEKLITSERFRGRIHFEFDKCIACEVCVRVCPIDLPVVDWKLETDIRKKRLLNYSIDFGICIFCGNCVEYCPTNCLSMTEEYELSTYDRHELNYNQIALGRVPMSIIDDYTIRTILNLPEIKT</sequence>